<dbReference type="EMBL" id="L77117">
    <property type="protein sequence ID" value="AAB99445.1"/>
    <property type="molecule type" value="Genomic_DNA"/>
</dbReference>
<dbReference type="PIR" id="C64479">
    <property type="entry name" value="C64479"/>
</dbReference>
<dbReference type="RefSeq" id="WP_010870954.1">
    <property type="nucleotide sequence ID" value="NC_000909.1"/>
</dbReference>
<dbReference type="SMR" id="Q58831"/>
<dbReference type="STRING" id="243232.MJ_1436"/>
<dbReference type="PaxDb" id="243232-MJ_1436"/>
<dbReference type="EnsemblBacteria" id="AAB99445">
    <property type="protein sequence ID" value="AAB99445"/>
    <property type="gene ID" value="MJ_1436"/>
</dbReference>
<dbReference type="GeneID" id="1452340"/>
<dbReference type="KEGG" id="mja:MJ_1436"/>
<dbReference type="eggNOG" id="arCOG04876">
    <property type="taxonomic scope" value="Archaea"/>
</dbReference>
<dbReference type="HOGENOM" id="CLU_162437_0_0_2"/>
<dbReference type="InParanoid" id="Q58831"/>
<dbReference type="OrthoDB" id="73069at2157"/>
<dbReference type="Proteomes" id="UP000000805">
    <property type="component" value="Chromosome"/>
</dbReference>
<dbReference type="InterPro" id="IPR019597">
    <property type="entry name" value="Energy-convert_hydgase-B_suP"/>
</dbReference>
<dbReference type="Pfam" id="PF10622">
    <property type="entry name" value="Ehbp"/>
    <property type="match status" value="1"/>
</dbReference>
<name>Y1436_METJA</name>
<comment type="similarity">
    <text evidence="1">To M.thermoautotrophicum MTH1236.</text>
</comment>
<feature type="chain" id="PRO_0000107327" description="Uncharacterized protein MJ1436">
    <location>
        <begin position="1"/>
        <end position="97"/>
    </location>
</feature>
<proteinExistence type="predicted"/>
<organism>
    <name type="scientific">Methanocaldococcus jannaschii (strain ATCC 43067 / DSM 2661 / JAL-1 / JCM 10045 / NBRC 100440)</name>
    <name type="common">Methanococcus jannaschii</name>
    <dbReference type="NCBI Taxonomy" id="243232"/>
    <lineage>
        <taxon>Archaea</taxon>
        <taxon>Methanobacteriati</taxon>
        <taxon>Methanobacteriota</taxon>
        <taxon>Methanomada group</taxon>
        <taxon>Methanococci</taxon>
        <taxon>Methanococcales</taxon>
        <taxon>Methanocaldococcaceae</taxon>
        <taxon>Methanocaldococcus</taxon>
    </lineage>
</organism>
<protein>
    <recommendedName>
        <fullName>Uncharacterized protein MJ1436</fullName>
    </recommendedName>
</protein>
<sequence length="97" mass="11265">MPKMVLLPRMTMALGGYIRETTFPYEEDDEVKPFPYRNVIVGNPTDEPIKIEVPAYNEGWIERHKKLGLIVVPVNEDDDFVGLFQMVKEKVKNAKRE</sequence>
<evidence type="ECO:0000305" key="1"/>
<gene>
    <name type="ordered locus">MJ1436</name>
</gene>
<accession>Q58831</accession>
<keyword id="KW-1185">Reference proteome</keyword>
<reference key="1">
    <citation type="journal article" date="1996" name="Science">
        <title>Complete genome sequence of the methanogenic archaeon, Methanococcus jannaschii.</title>
        <authorList>
            <person name="Bult C.J."/>
            <person name="White O."/>
            <person name="Olsen G.J."/>
            <person name="Zhou L."/>
            <person name="Fleischmann R.D."/>
            <person name="Sutton G.G."/>
            <person name="Blake J.A."/>
            <person name="FitzGerald L.M."/>
            <person name="Clayton R.A."/>
            <person name="Gocayne J.D."/>
            <person name="Kerlavage A.R."/>
            <person name="Dougherty B.A."/>
            <person name="Tomb J.-F."/>
            <person name="Adams M.D."/>
            <person name="Reich C.I."/>
            <person name="Overbeek R."/>
            <person name="Kirkness E.F."/>
            <person name="Weinstock K.G."/>
            <person name="Merrick J.M."/>
            <person name="Glodek A."/>
            <person name="Scott J.L."/>
            <person name="Geoghagen N.S.M."/>
            <person name="Weidman J.F."/>
            <person name="Fuhrmann J.L."/>
            <person name="Nguyen D."/>
            <person name="Utterback T.R."/>
            <person name="Kelley J.M."/>
            <person name="Peterson J.D."/>
            <person name="Sadow P.W."/>
            <person name="Hanna M.C."/>
            <person name="Cotton M.D."/>
            <person name="Roberts K.M."/>
            <person name="Hurst M.A."/>
            <person name="Kaine B.P."/>
            <person name="Borodovsky M."/>
            <person name="Klenk H.-P."/>
            <person name="Fraser C.M."/>
            <person name="Smith H.O."/>
            <person name="Woese C.R."/>
            <person name="Venter J.C."/>
        </authorList>
    </citation>
    <scope>NUCLEOTIDE SEQUENCE [LARGE SCALE GENOMIC DNA]</scope>
    <source>
        <strain>ATCC 43067 / DSM 2661 / JAL-1 / JCM 10045 / NBRC 100440</strain>
    </source>
</reference>